<name>MURB_ANADE</name>
<feature type="chain" id="PRO_0000332445" description="UDP-N-acetylenolpyruvoylglucosamine reductase">
    <location>
        <begin position="1"/>
        <end position="329"/>
    </location>
</feature>
<feature type="domain" description="FAD-binding PCMH-type" evidence="1">
    <location>
        <begin position="28"/>
        <end position="192"/>
    </location>
</feature>
<feature type="region of interest" description="Disordered" evidence="2">
    <location>
        <begin position="204"/>
        <end position="225"/>
    </location>
</feature>
<feature type="region of interest" description="Disordered" evidence="2">
    <location>
        <begin position="303"/>
        <end position="329"/>
    </location>
</feature>
<feature type="compositionally biased region" description="Gly residues" evidence="2">
    <location>
        <begin position="311"/>
        <end position="320"/>
    </location>
</feature>
<feature type="active site" evidence="1">
    <location>
        <position position="172"/>
    </location>
</feature>
<feature type="active site" description="Proton donor" evidence="1">
    <location>
        <position position="221"/>
    </location>
</feature>
<feature type="active site" evidence="1">
    <location>
        <position position="291"/>
    </location>
</feature>
<organism>
    <name type="scientific">Anaeromyxobacter dehalogenans (strain 2CP-C)</name>
    <dbReference type="NCBI Taxonomy" id="290397"/>
    <lineage>
        <taxon>Bacteria</taxon>
        <taxon>Pseudomonadati</taxon>
        <taxon>Myxococcota</taxon>
        <taxon>Myxococcia</taxon>
        <taxon>Myxococcales</taxon>
        <taxon>Cystobacterineae</taxon>
        <taxon>Anaeromyxobacteraceae</taxon>
        <taxon>Anaeromyxobacter</taxon>
    </lineage>
</organism>
<gene>
    <name evidence="1" type="primary">murB</name>
    <name type="ordered locus">Adeh_3773</name>
</gene>
<dbReference type="EC" id="1.3.1.98" evidence="1"/>
<dbReference type="EMBL" id="CP000251">
    <property type="protein sequence ID" value="ABC83539.1"/>
    <property type="molecule type" value="Genomic_DNA"/>
</dbReference>
<dbReference type="RefSeq" id="WP_011422821.1">
    <property type="nucleotide sequence ID" value="NC_007760.1"/>
</dbReference>
<dbReference type="SMR" id="Q2IG34"/>
<dbReference type="STRING" id="290397.Adeh_3773"/>
<dbReference type="KEGG" id="ade:Adeh_3773"/>
<dbReference type="eggNOG" id="COG0812">
    <property type="taxonomic scope" value="Bacteria"/>
</dbReference>
<dbReference type="HOGENOM" id="CLU_035304_1_1_7"/>
<dbReference type="OrthoDB" id="9804753at2"/>
<dbReference type="UniPathway" id="UPA00219"/>
<dbReference type="Proteomes" id="UP000001935">
    <property type="component" value="Chromosome"/>
</dbReference>
<dbReference type="GO" id="GO:0005829">
    <property type="term" value="C:cytosol"/>
    <property type="evidence" value="ECO:0007669"/>
    <property type="project" value="TreeGrafter"/>
</dbReference>
<dbReference type="GO" id="GO:0071949">
    <property type="term" value="F:FAD binding"/>
    <property type="evidence" value="ECO:0007669"/>
    <property type="project" value="InterPro"/>
</dbReference>
<dbReference type="GO" id="GO:0008762">
    <property type="term" value="F:UDP-N-acetylmuramate dehydrogenase activity"/>
    <property type="evidence" value="ECO:0007669"/>
    <property type="project" value="UniProtKB-UniRule"/>
</dbReference>
<dbReference type="GO" id="GO:0051301">
    <property type="term" value="P:cell division"/>
    <property type="evidence" value="ECO:0007669"/>
    <property type="project" value="UniProtKB-KW"/>
</dbReference>
<dbReference type="GO" id="GO:0071555">
    <property type="term" value="P:cell wall organization"/>
    <property type="evidence" value="ECO:0007669"/>
    <property type="project" value="UniProtKB-KW"/>
</dbReference>
<dbReference type="GO" id="GO:0009252">
    <property type="term" value="P:peptidoglycan biosynthetic process"/>
    <property type="evidence" value="ECO:0007669"/>
    <property type="project" value="UniProtKB-UniRule"/>
</dbReference>
<dbReference type="GO" id="GO:0008360">
    <property type="term" value="P:regulation of cell shape"/>
    <property type="evidence" value="ECO:0007669"/>
    <property type="project" value="UniProtKB-KW"/>
</dbReference>
<dbReference type="Gene3D" id="3.30.465.10">
    <property type="match status" value="1"/>
</dbReference>
<dbReference type="Gene3D" id="3.90.78.10">
    <property type="entry name" value="UDP-N-acetylenolpyruvoylglucosamine reductase, C-terminal domain"/>
    <property type="match status" value="1"/>
</dbReference>
<dbReference type="Gene3D" id="3.30.43.10">
    <property type="entry name" value="Uridine Diphospho-n-acetylenolpyruvylglucosamine Reductase, domain 2"/>
    <property type="match status" value="1"/>
</dbReference>
<dbReference type="HAMAP" id="MF_00037">
    <property type="entry name" value="MurB"/>
    <property type="match status" value="1"/>
</dbReference>
<dbReference type="InterPro" id="IPR016166">
    <property type="entry name" value="FAD-bd_PCMH"/>
</dbReference>
<dbReference type="InterPro" id="IPR036318">
    <property type="entry name" value="FAD-bd_PCMH-like_sf"/>
</dbReference>
<dbReference type="InterPro" id="IPR016167">
    <property type="entry name" value="FAD-bd_PCMH_sub1"/>
</dbReference>
<dbReference type="InterPro" id="IPR016169">
    <property type="entry name" value="FAD-bd_PCMH_sub2"/>
</dbReference>
<dbReference type="InterPro" id="IPR003170">
    <property type="entry name" value="MurB"/>
</dbReference>
<dbReference type="InterPro" id="IPR011601">
    <property type="entry name" value="MurB_C"/>
</dbReference>
<dbReference type="InterPro" id="IPR036635">
    <property type="entry name" value="MurB_C_sf"/>
</dbReference>
<dbReference type="InterPro" id="IPR006094">
    <property type="entry name" value="Oxid_FAD_bind_N"/>
</dbReference>
<dbReference type="NCBIfam" id="TIGR00179">
    <property type="entry name" value="murB"/>
    <property type="match status" value="1"/>
</dbReference>
<dbReference type="NCBIfam" id="NF010480">
    <property type="entry name" value="PRK13905.1"/>
    <property type="match status" value="1"/>
</dbReference>
<dbReference type="PANTHER" id="PTHR21071">
    <property type="entry name" value="UDP-N-ACETYLENOLPYRUVOYLGLUCOSAMINE REDUCTASE"/>
    <property type="match status" value="1"/>
</dbReference>
<dbReference type="PANTHER" id="PTHR21071:SF4">
    <property type="entry name" value="UDP-N-ACETYLENOLPYRUVOYLGLUCOSAMINE REDUCTASE"/>
    <property type="match status" value="1"/>
</dbReference>
<dbReference type="Pfam" id="PF01565">
    <property type="entry name" value="FAD_binding_4"/>
    <property type="match status" value="1"/>
</dbReference>
<dbReference type="Pfam" id="PF02873">
    <property type="entry name" value="MurB_C"/>
    <property type="match status" value="1"/>
</dbReference>
<dbReference type="SUPFAM" id="SSF56176">
    <property type="entry name" value="FAD-binding/transporter-associated domain-like"/>
    <property type="match status" value="1"/>
</dbReference>
<dbReference type="SUPFAM" id="SSF56194">
    <property type="entry name" value="Uridine diphospho-N-Acetylenolpyruvylglucosamine reductase, MurB, C-terminal domain"/>
    <property type="match status" value="1"/>
</dbReference>
<dbReference type="PROSITE" id="PS51387">
    <property type="entry name" value="FAD_PCMH"/>
    <property type="match status" value="1"/>
</dbReference>
<proteinExistence type="inferred from homology"/>
<protein>
    <recommendedName>
        <fullName evidence="1">UDP-N-acetylenolpyruvoylglucosamine reductase</fullName>
        <ecNumber evidence="1">1.3.1.98</ecNumber>
    </recommendedName>
    <alternativeName>
        <fullName evidence="1">UDP-N-acetylmuramate dehydrogenase</fullName>
    </alternativeName>
</protein>
<sequence length="329" mass="34002">MTWRDEIARRVRGEHLRDAPLAPRTAVRVGGPADLLCRPADGDALSALLGAVRELGVPLSVLGGGANTLVADAGVRGVVLRLPQDFPGESTDGDTLVLSAGAPIARLPARAHAHGLVGMEFLGGIPGTLGGAAAMNAGTRLGEMKDVVTRLELATADGAGFVPAAALGYAYRTCRLPPGAVVARVEVRLRPGDVAASEALMREDRERRRATQPLDRPTFGSTFTNPPGEYAGRLIEAVGLKGHRVGGAVWSPVHANFVTNLGGATARDVLALIRLARARVKERFGIALETEVRLMGEFPPDELAGLDGHAADGGGPGAASGGARPREAT</sequence>
<accession>Q2IG34</accession>
<reference key="1">
    <citation type="submission" date="2006-01" db="EMBL/GenBank/DDBJ databases">
        <title>Complete sequence of Anaeromyxobacter dehalogenans 2CP-C.</title>
        <authorList>
            <person name="Copeland A."/>
            <person name="Lucas S."/>
            <person name="Lapidus A."/>
            <person name="Barry K."/>
            <person name="Detter J.C."/>
            <person name="Glavina T."/>
            <person name="Hammon N."/>
            <person name="Israni S."/>
            <person name="Pitluck S."/>
            <person name="Brettin T."/>
            <person name="Bruce D."/>
            <person name="Han C."/>
            <person name="Tapia R."/>
            <person name="Gilna P."/>
            <person name="Kiss H."/>
            <person name="Schmutz J."/>
            <person name="Larimer F."/>
            <person name="Land M."/>
            <person name="Kyrpides N."/>
            <person name="Anderson I."/>
            <person name="Sanford R.A."/>
            <person name="Ritalahti K.M."/>
            <person name="Thomas H.S."/>
            <person name="Kirby J.R."/>
            <person name="Zhulin I.B."/>
            <person name="Loeffler F.E."/>
            <person name="Richardson P."/>
        </authorList>
    </citation>
    <scope>NUCLEOTIDE SEQUENCE [LARGE SCALE GENOMIC DNA]</scope>
    <source>
        <strain>2CP-C</strain>
    </source>
</reference>
<keyword id="KW-0131">Cell cycle</keyword>
<keyword id="KW-0132">Cell division</keyword>
<keyword id="KW-0133">Cell shape</keyword>
<keyword id="KW-0961">Cell wall biogenesis/degradation</keyword>
<keyword id="KW-0963">Cytoplasm</keyword>
<keyword id="KW-0274">FAD</keyword>
<keyword id="KW-0285">Flavoprotein</keyword>
<keyword id="KW-0521">NADP</keyword>
<keyword id="KW-0560">Oxidoreductase</keyword>
<keyword id="KW-0573">Peptidoglycan synthesis</keyword>
<keyword id="KW-1185">Reference proteome</keyword>
<comment type="function">
    <text evidence="1">Cell wall formation.</text>
</comment>
<comment type="catalytic activity">
    <reaction evidence="1">
        <text>UDP-N-acetyl-alpha-D-muramate + NADP(+) = UDP-N-acetyl-3-O-(1-carboxyvinyl)-alpha-D-glucosamine + NADPH + H(+)</text>
        <dbReference type="Rhea" id="RHEA:12248"/>
        <dbReference type="ChEBI" id="CHEBI:15378"/>
        <dbReference type="ChEBI" id="CHEBI:57783"/>
        <dbReference type="ChEBI" id="CHEBI:58349"/>
        <dbReference type="ChEBI" id="CHEBI:68483"/>
        <dbReference type="ChEBI" id="CHEBI:70757"/>
        <dbReference type="EC" id="1.3.1.98"/>
    </reaction>
</comment>
<comment type="cofactor">
    <cofactor evidence="1">
        <name>FAD</name>
        <dbReference type="ChEBI" id="CHEBI:57692"/>
    </cofactor>
</comment>
<comment type="pathway">
    <text evidence="1">Cell wall biogenesis; peptidoglycan biosynthesis.</text>
</comment>
<comment type="subcellular location">
    <subcellularLocation>
        <location evidence="1">Cytoplasm</location>
    </subcellularLocation>
</comment>
<comment type="similarity">
    <text evidence="1">Belongs to the MurB family.</text>
</comment>
<evidence type="ECO:0000255" key="1">
    <source>
        <dbReference type="HAMAP-Rule" id="MF_00037"/>
    </source>
</evidence>
<evidence type="ECO:0000256" key="2">
    <source>
        <dbReference type="SAM" id="MobiDB-lite"/>
    </source>
</evidence>